<reference key="1">
    <citation type="journal article" date="1998" name="Eur. J. Immunogenet.">
        <title>Molecular cloning and sequencing of feline stromal cell-derived factor-1 alpha and beta.</title>
        <authorList>
            <person name="Nishimura Y."/>
            <person name="Miyazawa T."/>
            <person name="Ikeda Y."/>
            <person name="Izumiya Y."/>
            <person name="Nakamura K."/>
            <person name="Cai J.S."/>
            <person name="Sato E."/>
            <person name="Kohmoto M."/>
            <person name="Mikami T."/>
        </authorList>
    </citation>
    <scope>NUCLEOTIDE SEQUENCE [MRNA] (ISOFORMS ALPHA AND BETA)</scope>
    <source>
        <tissue>Thymus</tissue>
    </source>
</reference>
<proteinExistence type="inferred from homology"/>
<comment type="function">
    <text evidence="2 3">Chemoattractant active on T-lymphocytes and monocytes but not neutrophils. Activates the C-X-C chemokine receptor CXCR4 to induce a rapid and transient rise in the level of intracellular calcium ions and chemotaxis. Also binds to atypical chemokine receptor ACKR3, which activates the beta-arrestin pathway and acts as a scavenger receptor for SDF-1. Acts as a positive regulator of monocyte migration and a negative regulator of monocyte adhesion via the LYN kinase. Binds to the allosteric site (site 2) of integrins and activates integrins ITGAV:ITGB3, ITGA4:ITGB1 and ITGA5:ITGB1 in a CXCR4-independent manner. Stimulates migration of monocytes and T-lymphocytes through its receptors, CXCR4 and ACKR3, and decreases monocyte adherence to surfaces coated with ICAM-1, a ligand for beta-2 integrins. SDF1A/CXCR4 signaling axis inhibits beta-2 integrin LFA-1 mediated adhesion of monocytes to ICAM-1 through LYN kinase. Plays a protective role after myocardial infarction. Has several critical functions during embryonic development; required for B-cell lymphopoiesis, myelopoiesis in bone marrow and heart ventricular septum formation. Stimulates the proliferation of bone marrow-derived B-cell progenitors in the presence of IL7 as well as growth of stromal cell-dependent pre-B-cells.</text>
</comment>
<comment type="subunit">
    <text evidence="3">Monomer or homodimer; in equilibrium. Dimer formation is induced by non acidic pH and the presence of multivalent anions, and by binding to CXCR4 or heparin. Monomeric form is required for full chemotactic activity and resistance to ischemia/reperfusion injury, whereas the dimeric form acts as a partial agonist of CXCR4, stimulating Ca2+ mobilization but with no chemotactic activity and instead acts as a selective antagonist that blocks chemotaxis induced by the monomeric form. Interacts with the N-terminus of ACKR3. Interacts with integrin subunit ITGB3 (via the allosteric site (site 2)). Interacts with TNFAIP6 (via Link domain).</text>
</comment>
<comment type="subcellular location">
    <subcellularLocation>
        <location>Secreted</location>
    </subcellularLocation>
</comment>
<comment type="alternative products">
    <event type="alternative splicing"/>
    <isoform>
        <id>O62657-1</id>
        <name>Beta</name>
        <name>SDF-1b</name>
        <sequence type="displayed"/>
    </isoform>
    <isoform>
        <id>O62657-2</id>
        <name>Alpha</name>
        <name>SDF-1a</name>
        <sequence type="described" ref="VSP_001055"/>
    </isoform>
</comment>
<comment type="similarity">
    <text evidence="6">Belongs to the intercrine alpha (chemokine CxC) family.</text>
</comment>
<protein>
    <recommendedName>
        <fullName>Stromal cell-derived factor 1</fullName>
        <shortName>SDF-1</shortName>
    </recommendedName>
    <alternativeName>
        <fullName>C-X-C motif chemokine 12</fullName>
    </alternativeName>
</protein>
<gene>
    <name type="primary">CXCL12</name>
    <name type="synonym">SDF1</name>
</gene>
<evidence type="ECO:0000250" key="1"/>
<evidence type="ECO:0000250" key="2">
    <source>
        <dbReference type="UniProtKB" id="P40224"/>
    </source>
</evidence>
<evidence type="ECO:0000250" key="3">
    <source>
        <dbReference type="UniProtKB" id="P48061"/>
    </source>
</evidence>
<evidence type="ECO:0000255" key="4"/>
<evidence type="ECO:0000303" key="5">
    <source>
    </source>
</evidence>
<evidence type="ECO:0000305" key="6"/>
<accession>O62657</accession>
<accession>Q54AJ3</accession>
<name>SDF1_FELCA</name>
<keyword id="KW-0025">Alternative splicing</keyword>
<keyword id="KW-0145">Chemotaxis</keyword>
<keyword id="KW-0202">Cytokine</keyword>
<keyword id="KW-1015">Disulfide bond</keyword>
<keyword id="KW-0339">Growth factor</keyword>
<keyword id="KW-1185">Reference proteome</keyword>
<keyword id="KW-0964">Secreted</keyword>
<keyword id="KW-0732">Signal</keyword>
<organism>
    <name type="scientific">Felis catus</name>
    <name type="common">Cat</name>
    <name type="synonym">Felis silvestris catus</name>
    <dbReference type="NCBI Taxonomy" id="9685"/>
    <lineage>
        <taxon>Eukaryota</taxon>
        <taxon>Metazoa</taxon>
        <taxon>Chordata</taxon>
        <taxon>Craniata</taxon>
        <taxon>Vertebrata</taxon>
        <taxon>Euteleostomi</taxon>
        <taxon>Mammalia</taxon>
        <taxon>Eutheria</taxon>
        <taxon>Laurasiatheria</taxon>
        <taxon>Carnivora</taxon>
        <taxon>Feliformia</taxon>
        <taxon>Felidae</taxon>
        <taxon>Felinae</taxon>
        <taxon>Felis</taxon>
    </lineage>
</organism>
<feature type="signal peptide" evidence="4">
    <location>
        <begin position="1"/>
        <end position="21"/>
    </location>
</feature>
<feature type="chain" id="PRO_0000005108" description="Stromal cell-derived factor 1">
    <location>
        <begin position="22"/>
        <end position="93"/>
    </location>
</feature>
<feature type="region of interest" description="Receptor and heparin binding" evidence="1">
    <location>
        <begin position="29"/>
        <end position="33"/>
    </location>
</feature>
<feature type="region of interest" description="Receptor binding" evidence="1">
    <location>
        <begin position="39"/>
        <end position="41"/>
    </location>
</feature>
<feature type="region of interest" description="Receptor binding" evidence="1">
    <location>
        <begin position="48"/>
        <end position="50"/>
    </location>
</feature>
<feature type="region of interest" description="Receptor binding" evidence="1">
    <location>
        <begin position="60"/>
        <end position="70"/>
    </location>
</feature>
<feature type="short sequence motif" description="Receptor activation motif" evidence="1">
    <location>
        <begin position="22"/>
        <end position="23"/>
    </location>
</feature>
<feature type="binding site" evidence="1">
    <location>
        <begin position="41"/>
        <end position="51"/>
    </location>
    <ligand>
        <name>heparin</name>
        <dbReference type="ChEBI" id="CHEBI:28304"/>
    </ligand>
</feature>
<feature type="binding site" evidence="1">
    <location>
        <position position="62"/>
    </location>
    <ligand>
        <name>heparin</name>
        <dbReference type="ChEBI" id="CHEBI:28304"/>
    </ligand>
</feature>
<feature type="binding site" evidence="1">
    <location>
        <position position="69"/>
    </location>
    <ligand>
        <name>heparin</name>
        <dbReference type="ChEBI" id="CHEBI:28304"/>
    </ligand>
</feature>
<feature type="binding site" evidence="1">
    <location>
        <position position="85"/>
    </location>
    <ligand>
        <name>heparin</name>
        <dbReference type="ChEBI" id="CHEBI:28304"/>
    </ligand>
</feature>
<feature type="site" description="Important for integrin interaction and activation" evidence="3">
    <location>
        <position position="45"/>
    </location>
</feature>
<feature type="site" description="Important for dimer formation" evidence="1">
    <location>
        <position position="46"/>
    </location>
</feature>
<feature type="site" description="Important for integrin interaction and activation" evidence="3">
    <location>
        <position position="48"/>
    </location>
</feature>
<feature type="site" description="Important for integrin interaction and activation" evidence="3">
    <location>
        <position position="64"/>
    </location>
</feature>
<feature type="disulfide bond" evidence="1">
    <location>
        <begin position="30"/>
        <end position="55"/>
    </location>
</feature>
<feature type="disulfide bond" evidence="1">
    <location>
        <begin position="32"/>
        <end position="71"/>
    </location>
</feature>
<feature type="splice variant" id="VSP_001055" description="In isoform Alpha." evidence="5">
    <location>
        <begin position="90"/>
        <end position="93"/>
    </location>
</feature>
<dbReference type="EMBL" id="AB011965">
    <property type="protein sequence ID" value="BAA28601.1"/>
    <property type="molecule type" value="mRNA"/>
</dbReference>
<dbReference type="EMBL" id="AB011966">
    <property type="protein sequence ID" value="BAA28602.1"/>
    <property type="molecule type" value="mRNA"/>
</dbReference>
<dbReference type="RefSeq" id="NP_001009847.1">
    <molecule id="O62657-1"/>
    <property type="nucleotide sequence ID" value="NM_001009847.1"/>
</dbReference>
<dbReference type="BMRB" id="O62657"/>
<dbReference type="SMR" id="O62657"/>
<dbReference type="STRING" id="9685.ENSFCAP00000060431"/>
<dbReference type="PaxDb" id="9685-ENSFCAP00000007102"/>
<dbReference type="Ensembl" id="ENSFCAT00000058624.1">
    <molecule id="O62657-1"/>
    <property type="protein sequence ID" value="ENSFCAP00000044453.1"/>
    <property type="gene ID" value="ENSFCAG00000036777.3"/>
</dbReference>
<dbReference type="GeneID" id="493806"/>
<dbReference type="KEGG" id="fca:493806"/>
<dbReference type="CTD" id="6387"/>
<dbReference type="eggNOG" id="ENOG502S54U">
    <property type="taxonomic scope" value="Eukaryota"/>
</dbReference>
<dbReference type="GeneTree" id="ENSGT00390000014056"/>
<dbReference type="HOGENOM" id="CLU_154284_2_0_1"/>
<dbReference type="InParanoid" id="O62657"/>
<dbReference type="OrthoDB" id="9884353at2759"/>
<dbReference type="Proteomes" id="UP000011712">
    <property type="component" value="Chromosome D2"/>
</dbReference>
<dbReference type="Bgee" id="ENSFCAG00000036777">
    <property type="expression patterns" value="Expressed in spleen and 9 other cell types or tissues"/>
</dbReference>
<dbReference type="GO" id="GO:0009897">
    <property type="term" value="C:external side of plasma membrane"/>
    <property type="evidence" value="ECO:0000318"/>
    <property type="project" value="GO_Central"/>
</dbReference>
<dbReference type="GO" id="GO:0005615">
    <property type="term" value="C:extracellular space"/>
    <property type="evidence" value="ECO:0007669"/>
    <property type="project" value="UniProtKB-KW"/>
</dbReference>
<dbReference type="GO" id="GO:0008009">
    <property type="term" value="F:chemokine activity"/>
    <property type="evidence" value="ECO:0000318"/>
    <property type="project" value="GO_Central"/>
</dbReference>
<dbReference type="GO" id="GO:0042379">
    <property type="term" value="F:chemokine receptor binding"/>
    <property type="evidence" value="ECO:0000250"/>
    <property type="project" value="UniProtKB"/>
</dbReference>
<dbReference type="GO" id="GO:0045236">
    <property type="term" value="F:CXCR chemokine receptor binding"/>
    <property type="evidence" value="ECO:0000318"/>
    <property type="project" value="GO_Central"/>
</dbReference>
<dbReference type="GO" id="GO:0008083">
    <property type="term" value="F:growth factor activity"/>
    <property type="evidence" value="ECO:0007669"/>
    <property type="project" value="UniProtKB-KW"/>
</dbReference>
<dbReference type="GO" id="GO:0005178">
    <property type="term" value="F:integrin binding"/>
    <property type="evidence" value="ECO:0000250"/>
    <property type="project" value="UniProtKB"/>
</dbReference>
<dbReference type="GO" id="GO:0007411">
    <property type="term" value="P:axon guidance"/>
    <property type="evidence" value="ECO:0000318"/>
    <property type="project" value="GO_Central"/>
</dbReference>
<dbReference type="GO" id="GO:0060326">
    <property type="term" value="P:cell chemotaxis"/>
    <property type="evidence" value="ECO:0000318"/>
    <property type="project" value="GO_Central"/>
</dbReference>
<dbReference type="GO" id="GO:0070098">
    <property type="term" value="P:chemokine-mediated signaling pathway"/>
    <property type="evidence" value="ECO:0000318"/>
    <property type="project" value="GO_Central"/>
</dbReference>
<dbReference type="GO" id="GO:0006952">
    <property type="term" value="P:defense response"/>
    <property type="evidence" value="ECO:0007669"/>
    <property type="project" value="InterPro"/>
</dbReference>
<dbReference type="GO" id="GO:0006955">
    <property type="term" value="P:immune response"/>
    <property type="evidence" value="ECO:0007669"/>
    <property type="project" value="InterPro"/>
</dbReference>
<dbReference type="GO" id="GO:0050930">
    <property type="term" value="P:induction of positive chemotaxis"/>
    <property type="evidence" value="ECO:0000318"/>
    <property type="project" value="GO_Central"/>
</dbReference>
<dbReference type="GO" id="GO:0033622">
    <property type="term" value="P:integrin activation"/>
    <property type="evidence" value="ECO:0000250"/>
    <property type="project" value="UniProtKB"/>
</dbReference>
<dbReference type="GO" id="GO:0030335">
    <property type="term" value="P:positive regulation of cell migration"/>
    <property type="evidence" value="ECO:0000318"/>
    <property type="project" value="GO_Central"/>
</dbReference>
<dbReference type="CDD" id="cd00273">
    <property type="entry name" value="Chemokine_CXC"/>
    <property type="match status" value="1"/>
</dbReference>
<dbReference type="FunFam" id="2.40.50.40:FF:000010">
    <property type="entry name" value="Stromal cell-derived factor 1 precursor"/>
    <property type="match status" value="1"/>
</dbReference>
<dbReference type="Gene3D" id="2.40.50.40">
    <property type="match status" value="1"/>
</dbReference>
<dbReference type="InterPro" id="IPR039809">
    <property type="entry name" value="Chemokine_b/g/d"/>
</dbReference>
<dbReference type="InterPro" id="IPR001811">
    <property type="entry name" value="Chemokine_IL8-like_dom"/>
</dbReference>
<dbReference type="InterPro" id="IPR033899">
    <property type="entry name" value="CXC_Chemokine_domain"/>
</dbReference>
<dbReference type="InterPro" id="IPR036048">
    <property type="entry name" value="Interleukin_8-like_sf"/>
</dbReference>
<dbReference type="PANTHER" id="PTHR12015">
    <property type="entry name" value="SMALL INDUCIBLE CYTOKINE A"/>
    <property type="match status" value="1"/>
</dbReference>
<dbReference type="PANTHER" id="PTHR12015:SF193">
    <property type="entry name" value="STROMAL CELL-DERIVED FACTOR 1"/>
    <property type="match status" value="1"/>
</dbReference>
<dbReference type="Pfam" id="PF00048">
    <property type="entry name" value="IL8"/>
    <property type="match status" value="1"/>
</dbReference>
<dbReference type="PRINTS" id="PR00436">
    <property type="entry name" value="INTERLEUKIN8"/>
</dbReference>
<dbReference type="SMART" id="SM00199">
    <property type="entry name" value="SCY"/>
    <property type="match status" value="1"/>
</dbReference>
<dbReference type="SUPFAM" id="SSF54117">
    <property type="entry name" value="Interleukin 8-like chemokines"/>
    <property type="match status" value="1"/>
</dbReference>
<sequence>MDAKVVAVLALVLAALCLSDGKPVSLSYRCPCRFFESHVARANVKHLKILNTPNCALQIVARLKNNNRQVCIDPKLKWIQEYLEKALNKRFKM</sequence>